<comment type="function">
    <text evidence="1">Specifically methylates position 2 of adenine 2503 in 23S rRNA and position 2 of adenine 37 in tRNAs.</text>
</comment>
<comment type="catalytic activity">
    <reaction evidence="1">
        <text>adenosine(2503) in 23S rRNA + 2 reduced [2Fe-2S]-[ferredoxin] + 2 S-adenosyl-L-methionine = 2-methyladenosine(2503) in 23S rRNA + 5'-deoxyadenosine + L-methionine + 2 oxidized [2Fe-2S]-[ferredoxin] + S-adenosyl-L-homocysteine</text>
        <dbReference type="Rhea" id="RHEA:42916"/>
        <dbReference type="Rhea" id="RHEA-COMP:10000"/>
        <dbReference type="Rhea" id="RHEA-COMP:10001"/>
        <dbReference type="Rhea" id="RHEA-COMP:10152"/>
        <dbReference type="Rhea" id="RHEA-COMP:10282"/>
        <dbReference type="ChEBI" id="CHEBI:17319"/>
        <dbReference type="ChEBI" id="CHEBI:33737"/>
        <dbReference type="ChEBI" id="CHEBI:33738"/>
        <dbReference type="ChEBI" id="CHEBI:57844"/>
        <dbReference type="ChEBI" id="CHEBI:57856"/>
        <dbReference type="ChEBI" id="CHEBI:59789"/>
        <dbReference type="ChEBI" id="CHEBI:74411"/>
        <dbReference type="ChEBI" id="CHEBI:74497"/>
        <dbReference type="EC" id="2.1.1.192"/>
    </reaction>
</comment>
<comment type="catalytic activity">
    <reaction evidence="1">
        <text>adenosine(37) in tRNA + 2 reduced [2Fe-2S]-[ferredoxin] + 2 S-adenosyl-L-methionine = 2-methyladenosine(37) in tRNA + 5'-deoxyadenosine + L-methionine + 2 oxidized [2Fe-2S]-[ferredoxin] + S-adenosyl-L-homocysteine</text>
        <dbReference type="Rhea" id="RHEA:43332"/>
        <dbReference type="Rhea" id="RHEA-COMP:10000"/>
        <dbReference type="Rhea" id="RHEA-COMP:10001"/>
        <dbReference type="Rhea" id="RHEA-COMP:10162"/>
        <dbReference type="Rhea" id="RHEA-COMP:10485"/>
        <dbReference type="ChEBI" id="CHEBI:17319"/>
        <dbReference type="ChEBI" id="CHEBI:33737"/>
        <dbReference type="ChEBI" id="CHEBI:33738"/>
        <dbReference type="ChEBI" id="CHEBI:57844"/>
        <dbReference type="ChEBI" id="CHEBI:57856"/>
        <dbReference type="ChEBI" id="CHEBI:59789"/>
        <dbReference type="ChEBI" id="CHEBI:74411"/>
        <dbReference type="ChEBI" id="CHEBI:74497"/>
        <dbReference type="EC" id="2.1.1.192"/>
    </reaction>
</comment>
<comment type="cofactor">
    <cofactor evidence="1">
        <name>[4Fe-4S] cluster</name>
        <dbReference type="ChEBI" id="CHEBI:49883"/>
    </cofactor>
    <text evidence="1">Binds 1 [4Fe-4S] cluster. The cluster is coordinated with 3 cysteines and an exchangeable S-adenosyl-L-methionine.</text>
</comment>
<comment type="subcellular location">
    <subcellularLocation>
        <location evidence="1">Cytoplasm</location>
    </subcellularLocation>
</comment>
<comment type="miscellaneous">
    <text evidence="1">Reaction proceeds by a ping-pong mechanism involving intermediate methylation of a conserved cysteine residue.</text>
</comment>
<comment type="similarity">
    <text evidence="1">Belongs to the radical SAM superfamily. RlmN family.</text>
</comment>
<sequence>METTVRKQKKNLETKKPSIYSLQLHEMQDWLKEQGEPKFRAGQIFDWLYKKRVKNYEDMSNLSKGLREKLSNSFDITTLNTLVKQTSSDGTIKFLFQLYDGYSIETVLMRHEYGNSICVTTQVGCRIGCTFCASTLGGLKRNLEAGEIVAQVVEVQRALDESEERVSSLVVMGIGEPFDNYDNLMGFLRIINHEKGLHIGARHMTVSTSGIIPKIYKFAEEDLQINFAISLHAPNSELRSKLMPINRAYKLPDLMEAIKYYVNRTGRRITFEYGLFGGENDQVEHAEELAALLKGVKCHVNLIPVNYVPERDYVRTPREQIFLFEKTLKDRGVNVTIRREQGHDIDAACGQLRAKERKEETR</sequence>
<reference key="1">
    <citation type="journal article" date="2006" name="J. Bacteriol.">
        <title>Pathogenomic sequence analysis of Bacillus cereus and Bacillus thuringiensis isolates closely related to Bacillus anthracis.</title>
        <authorList>
            <person name="Han C.S."/>
            <person name="Xie G."/>
            <person name="Challacombe J.F."/>
            <person name="Altherr M.R."/>
            <person name="Bhotika S.S."/>
            <person name="Bruce D."/>
            <person name="Campbell C.S."/>
            <person name="Campbell M.L."/>
            <person name="Chen J."/>
            <person name="Chertkov O."/>
            <person name="Cleland C."/>
            <person name="Dimitrijevic M."/>
            <person name="Doggett N.A."/>
            <person name="Fawcett J.J."/>
            <person name="Glavina T."/>
            <person name="Goodwin L.A."/>
            <person name="Hill K.K."/>
            <person name="Hitchcock P."/>
            <person name="Jackson P.J."/>
            <person name="Keim P."/>
            <person name="Kewalramani A.R."/>
            <person name="Longmire J."/>
            <person name="Lucas S."/>
            <person name="Malfatti S."/>
            <person name="McMurry K."/>
            <person name="Meincke L.J."/>
            <person name="Misra M."/>
            <person name="Moseman B.L."/>
            <person name="Mundt M."/>
            <person name="Munk A.C."/>
            <person name="Okinaka R.T."/>
            <person name="Parson-Quintana B."/>
            <person name="Reilly L.P."/>
            <person name="Richardson P."/>
            <person name="Robinson D.L."/>
            <person name="Rubin E."/>
            <person name="Saunders E."/>
            <person name="Tapia R."/>
            <person name="Tesmer J.G."/>
            <person name="Thayer N."/>
            <person name="Thompson L.S."/>
            <person name="Tice H."/>
            <person name="Ticknor L.O."/>
            <person name="Wills P.L."/>
            <person name="Brettin T.S."/>
            <person name="Gilna P."/>
        </authorList>
    </citation>
    <scope>NUCLEOTIDE SEQUENCE [LARGE SCALE GENOMIC DNA]</scope>
    <source>
        <strain>ZK / E33L</strain>
    </source>
</reference>
<protein>
    <recommendedName>
        <fullName evidence="1">Probable dual-specificity RNA methyltransferase RlmN</fullName>
        <ecNumber evidence="1">2.1.1.192</ecNumber>
    </recommendedName>
    <alternativeName>
        <fullName evidence="1">23S rRNA (adenine(2503)-C(2))-methyltransferase</fullName>
    </alternativeName>
    <alternativeName>
        <fullName evidence="1">23S rRNA m2A2503 methyltransferase</fullName>
    </alternativeName>
    <alternativeName>
        <fullName evidence="1">Ribosomal RNA large subunit methyltransferase N</fullName>
    </alternativeName>
    <alternativeName>
        <fullName evidence="1">tRNA (adenine(37)-C(2))-methyltransferase</fullName>
    </alternativeName>
    <alternativeName>
        <fullName evidence="1">tRNA m2A37 methyltransferase</fullName>
    </alternativeName>
</protein>
<organism>
    <name type="scientific">Bacillus cereus (strain ZK / E33L)</name>
    <dbReference type="NCBI Taxonomy" id="288681"/>
    <lineage>
        <taxon>Bacteria</taxon>
        <taxon>Bacillati</taxon>
        <taxon>Bacillota</taxon>
        <taxon>Bacilli</taxon>
        <taxon>Bacillales</taxon>
        <taxon>Bacillaceae</taxon>
        <taxon>Bacillus</taxon>
        <taxon>Bacillus cereus group</taxon>
    </lineage>
</organism>
<proteinExistence type="inferred from homology"/>
<feature type="chain" id="PRO_0000350030" description="Probable dual-specificity RNA methyltransferase RlmN">
    <location>
        <begin position="1"/>
        <end position="362"/>
    </location>
</feature>
<feature type="domain" description="Radical SAM core" evidence="2">
    <location>
        <begin position="111"/>
        <end position="344"/>
    </location>
</feature>
<feature type="active site" description="Proton acceptor" evidence="1">
    <location>
        <position position="105"/>
    </location>
</feature>
<feature type="active site" description="S-methylcysteine intermediate" evidence="1">
    <location>
        <position position="349"/>
    </location>
</feature>
<feature type="binding site" evidence="1">
    <location>
        <position position="125"/>
    </location>
    <ligand>
        <name>[4Fe-4S] cluster</name>
        <dbReference type="ChEBI" id="CHEBI:49883"/>
        <note>4Fe-4S-S-AdoMet</note>
    </ligand>
</feature>
<feature type="binding site" evidence="1">
    <location>
        <position position="129"/>
    </location>
    <ligand>
        <name>[4Fe-4S] cluster</name>
        <dbReference type="ChEBI" id="CHEBI:49883"/>
        <note>4Fe-4S-S-AdoMet</note>
    </ligand>
</feature>
<feature type="binding site" evidence="1">
    <location>
        <position position="132"/>
    </location>
    <ligand>
        <name>[4Fe-4S] cluster</name>
        <dbReference type="ChEBI" id="CHEBI:49883"/>
        <note>4Fe-4S-S-AdoMet</note>
    </ligand>
</feature>
<feature type="binding site" evidence="1">
    <location>
        <begin position="175"/>
        <end position="176"/>
    </location>
    <ligand>
        <name>S-adenosyl-L-methionine</name>
        <dbReference type="ChEBI" id="CHEBI:59789"/>
    </ligand>
</feature>
<feature type="binding site" evidence="1">
    <location>
        <position position="207"/>
    </location>
    <ligand>
        <name>S-adenosyl-L-methionine</name>
        <dbReference type="ChEBI" id="CHEBI:59789"/>
    </ligand>
</feature>
<feature type="binding site" evidence="1">
    <location>
        <begin position="230"/>
        <end position="232"/>
    </location>
    <ligand>
        <name>S-adenosyl-L-methionine</name>
        <dbReference type="ChEBI" id="CHEBI:59789"/>
    </ligand>
</feature>
<feature type="binding site" evidence="1">
    <location>
        <position position="306"/>
    </location>
    <ligand>
        <name>S-adenosyl-L-methionine</name>
        <dbReference type="ChEBI" id="CHEBI:59789"/>
    </ligand>
</feature>
<feature type="disulfide bond" description="(transient)" evidence="1">
    <location>
        <begin position="118"/>
        <end position="349"/>
    </location>
</feature>
<keyword id="KW-0004">4Fe-4S</keyword>
<keyword id="KW-0963">Cytoplasm</keyword>
<keyword id="KW-1015">Disulfide bond</keyword>
<keyword id="KW-0408">Iron</keyword>
<keyword id="KW-0411">Iron-sulfur</keyword>
<keyword id="KW-0479">Metal-binding</keyword>
<keyword id="KW-0489">Methyltransferase</keyword>
<keyword id="KW-0698">rRNA processing</keyword>
<keyword id="KW-0949">S-adenosyl-L-methionine</keyword>
<keyword id="KW-0808">Transferase</keyword>
<keyword id="KW-0819">tRNA processing</keyword>
<name>RLMN_BACCZ</name>
<evidence type="ECO:0000255" key="1">
    <source>
        <dbReference type="HAMAP-Rule" id="MF_01849"/>
    </source>
</evidence>
<evidence type="ECO:0000255" key="2">
    <source>
        <dbReference type="PROSITE-ProRule" id="PRU01266"/>
    </source>
</evidence>
<gene>
    <name evidence="1" type="primary">rlmN</name>
    <name type="ordered locus">BCE33L3623</name>
</gene>
<accession>Q636G2</accession>
<dbReference type="EC" id="2.1.1.192" evidence="1"/>
<dbReference type="EMBL" id="CP000001">
    <property type="protein sequence ID" value="AAU16643.1"/>
    <property type="molecule type" value="Genomic_DNA"/>
</dbReference>
<dbReference type="RefSeq" id="WP_000450543.1">
    <property type="nucleotide sequence ID" value="NZ_CP009968.1"/>
</dbReference>
<dbReference type="SMR" id="Q636G2"/>
<dbReference type="GeneID" id="75087000"/>
<dbReference type="KEGG" id="bcz:BCE33L3623"/>
<dbReference type="PATRIC" id="fig|288681.22.peg.1788"/>
<dbReference type="Proteomes" id="UP000002612">
    <property type="component" value="Chromosome"/>
</dbReference>
<dbReference type="GO" id="GO:0005737">
    <property type="term" value="C:cytoplasm"/>
    <property type="evidence" value="ECO:0007669"/>
    <property type="project" value="UniProtKB-SubCell"/>
</dbReference>
<dbReference type="GO" id="GO:0051539">
    <property type="term" value="F:4 iron, 4 sulfur cluster binding"/>
    <property type="evidence" value="ECO:0007669"/>
    <property type="project" value="UniProtKB-UniRule"/>
</dbReference>
<dbReference type="GO" id="GO:0046872">
    <property type="term" value="F:metal ion binding"/>
    <property type="evidence" value="ECO:0007669"/>
    <property type="project" value="UniProtKB-KW"/>
</dbReference>
<dbReference type="GO" id="GO:0070040">
    <property type="term" value="F:rRNA (adenine(2503)-C2-)-methyltransferase activity"/>
    <property type="evidence" value="ECO:0007669"/>
    <property type="project" value="UniProtKB-UniRule"/>
</dbReference>
<dbReference type="GO" id="GO:0019843">
    <property type="term" value="F:rRNA binding"/>
    <property type="evidence" value="ECO:0007669"/>
    <property type="project" value="UniProtKB-UniRule"/>
</dbReference>
<dbReference type="GO" id="GO:0002935">
    <property type="term" value="F:tRNA (adenine(37)-C2)-methyltransferase activity"/>
    <property type="evidence" value="ECO:0007669"/>
    <property type="project" value="UniProtKB-UniRule"/>
</dbReference>
<dbReference type="GO" id="GO:0000049">
    <property type="term" value="F:tRNA binding"/>
    <property type="evidence" value="ECO:0007669"/>
    <property type="project" value="UniProtKB-UniRule"/>
</dbReference>
<dbReference type="GO" id="GO:0070475">
    <property type="term" value="P:rRNA base methylation"/>
    <property type="evidence" value="ECO:0007669"/>
    <property type="project" value="UniProtKB-UniRule"/>
</dbReference>
<dbReference type="GO" id="GO:0030488">
    <property type="term" value="P:tRNA methylation"/>
    <property type="evidence" value="ECO:0007669"/>
    <property type="project" value="UniProtKB-UniRule"/>
</dbReference>
<dbReference type="CDD" id="cd01335">
    <property type="entry name" value="Radical_SAM"/>
    <property type="match status" value="1"/>
</dbReference>
<dbReference type="FunFam" id="1.10.150.530:FF:000002">
    <property type="entry name" value="Probable dual-specificity RNA methyltransferase RlmN"/>
    <property type="match status" value="1"/>
</dbReference>
<dbReference type="FunFam" id="3.20.20.70:FF:000014">
    <property type="entry name" value="Probable dual-specificity RNA methyltransferase RlmN"/>
    <property type="match status" value="1"/>
</dbReference>
<dbReference type="Gene3D" id="1.10.150.530">
    <property type="match status" value="1"/>
</dbReference>
<dbReference type="Gene3D" id="3.20.20.70">
    <property type="entry name" value="Aldolase class I"/>
    <property type="match status" value="1"/>
</dbReference>
<dbReference type="HAMAP" id="MF_01849">
    <property type="entry name" value="RNA_methyltr_RlmN"/>
    <property type="match status" value="1"/>
</dbReference>
<dbReference type="InterPro" id="IPR013785">
    <property type="entry name" value="Aldolase_TIM"/>
</dbReference>
<dbReference type="InterPro" id="IPR040072">
    <property type="entry name" value="Methyltransferase_A"/>
</dbReference>
<dbReference type="InterPro" id="IPR048641">
    <property type="entry name" value="RlmN_N"/>
</dbReference>
<dbReference type="InterPro" id="IPR027492">
    <property type="entry name" value="RNA_MTrfase_RlmN"/>
</dbReference>
<dbReference type="InterPro" id="IPR004383">
    <property type="entry name" value="rRNA_lsu_MTrfase_RlmN/Cfr"/>
</dbReference>
<dbReference type="InterPro" id="IPR007197">
    <property type="entry name" value="rSAM"/>
</dbReference>
<dbReference type="NCBIfam" id="TIGR00048">
    <property type="entry name" value="rRNA_mod_RlmN"/>
    <property type="match status" value="1"/>
</dbReference>
<dbReference type="PANTHER" id="PTHR30544">
    <property type="entry name" value="23S RRNA METHYLTRANSFERASE"/>
    <property type="match status" value="1"/>
</dbReference>
<dbReference type="PANTHER" id="PTHR30544:SF5">
    <property type="entry name" value="RADICAL SAM CORE DOMAIN-CONTAINING PROTEIN"/>
    <property type="match status" value="1"/>
</dbReference>
<dbReference type="Pfam" id="PF04055">
    <property type="entry name" value="Radical_SAM"/>
    <property type="match status" value="1"/>
</dbReference>
<dbReference type="Pfam" id="PF21016">
    <property type="entry name" value="RlmN_N"/>
    <property type="match status" value="1"/>
</dbReference>
<dbReference type="PIRSF" id="PIRSF006004">
    <property type="entry name" value="CHP00048"/>
    <property type="match status" value="1"/>
</dbReference>
<dbReference type="SFLD" id="SFLDF00275">
    <property type="entry name" value="adenosine_C2_methyltransferase"/>
    <property type="match status" value="1"/>
</dbReference>
<dbReference type="SFLD" id="SFLDS00029">
    <property type="entry name" value="Radical_SAM"/>
    <property type="match status" value="1"/>
</dbReference>
<dbReference type="SUPFAM" id="SSF102114">
    <property type="entry name" value="Radical SAM enzymes"/>
    <property type="match status" value="1"/>
</dbReference>
<dbReference type="PROSITE" id="PS51918">
    <property type="entry name" value="RADICAL_SAM"/>
    <property type="match status" value="1"/>
</dbReference>